<name>HSL13_DICDI</name>
<accession>Q55AL8</accession>
<accession>Q75JC4</accession>
<sequence>MTLLASISTIGNVKSISKSNNFSSLSNSSLQSSNSIQCGCGGGSPLIGTVGNLVGGVLVGTGIILGTVVGTVNGVVGGLLSGPNCGCH</sequence>
<feature type="chain" id="PRO_0000330383" description="HssA/B-like protein 13">
    <location>
        <begin position="1"/>
        <end position="88"/>
    </location>
</feature>
<dbReference type="EMBL" id="AAFI02000006">
    <property type="protein sequence ID" value="EAL71601.1"/>
    <property type="molecule type" value="Genomic_DNA"/>
</dbReference>
<dbReference type="RefSeq" id="XP_645504.1">
    <property type="nucleotide sequence ID" value="XM_640412.1"/>
</dbReference>
<dbReference type="FunCoup" id="Q55AL8">
    <property type="interactions" value="243"/>
</dbReference>
<dbReference type="PaxDb" id="44689-DDB0238815"/>
<dbReference type="EnsemblProtists" id="EAL71601">
    <property type="protein sequence ID" value="EAL71601"/>
    <property type="gene ID" value="DDB_G0271822"/>
</dbReference>
<dbReference type="GeneID" id="8618133"/>
<dbReference type="KEGG" id="ddi:DDB_G0271822"/>
<dbReference type="dictyBase" id="DDB_G0271822">
    <property type="gene designation" value="sigN11"/>
</dbReference>
<dbReference type="eggNOG" id="ENOG502RIQ1">
    <property type="taxonomic scope" value="Eukaryota"/>
</dbReference>
<dbReference type="HOGENOM" id="CLU_190274_0_0_1"/>
<dbReference type="InParanoid" id="Q55AL8"/>
<dbReference type="OMA" id="CGPIGIV"/>
<dbReference type="PRO" id="PR:Q55AL8"/>
<dbReference type="Proteomes" id="UP000002195">
    <property type="component" value="Chromosome 2"/>
</dbReference>
<dbReference type="GO" id="GO:0030587">
    <property type="term" value="P:sorocarp development"/>
    <property type="evidence" value="ECO:0000318"/>
    <property type="project" value="GO_Central"/>
</dbReference>
<dbReference type="InterPro" id="IPR008455">
    <property type="entry name" value="HssA/B-related"/>
</dbReference>
<dbReference type="PANTHER" id="PTHR31857">
    <property type="entry name" value="HSSA/B-LIKE PROTEIN 17-RELATED"/>
    <property type="match status" value="1"/>
</dbReference>
<dbReference type="PANTHER" id="PTHR31857:SF2">
    <property type="entry name" value="HSSA_B-LIKE PROTEIN 17-RELATED"/>
    <property type="match status" value="1"/>
</dbReference>
<dbReference type="Pfam" id="PF05710">
    <property type="entry name" value="Coiled"/>
    <property type="match status" value="1"/>
</dbReference>
<comment type="similarity">
    <text evidence="1">Belongs to the hssA/B family.</text>
</comment>
<proteinExistence type="inferred from homology"/>
<keyword id="KW-1185">Reference proteome</keyword>
<gene>
    <name type="primary">hssl13</name>
    <name type="ORF">DDB_G0271822</name>
</gene>
<reference key="1">
    <citation type="journal article" date="2002" name="Nature">
        <title>Sequence and analysis of chromosome 2 of Dictyostelium discoideum.</title>
        <authorList>
            <person name="Gloeckner G."/>
            <person name="Eichinger L."/>
            <person name="Szafranski K."/>
            <person name="Pachebat J.A."/>
            <person name="Bankier A.T."/>
            <person name="Dear P.H."/>
            <person name="Lehmann R."/>
            <person name="Baumgart C."/>
            <person name="Parra G."/>
            <person name="Abril J.F."/>
            <person name="Guigo R."/>
            <person name="Kumpf K."/>
            <person name="Tunggal B."/>
            <person name="Cox E.C."/>
            <person name="Quail M.A."/>
            <person name="Platzer M."/>
            <person name="Rosenthal A."/>
            <person name="Noegel A.A."/>
        </authorList>
    </citation>
    <scope>NUCLEOTIDE SEQUENCE [LARGE SCALE GENOMIC DNA]</scope>
    <source>
        <strain>AX4</strain>
    </source>
</reference>
<reference key="2">
    <citation type="journal article" date="2005" name="Nature">
        <title>The genome of the social amoeba Dictyostelium discoideum.</title>
        <authorList>
            <person name="Eichinger L."/>
            <person name="Pachebat J.A."/>
            <person name="Gloeckner G."/>
            <person name="Rajandream M.A."/>
            <person name="Sucgang R."/>
            <person name="Berriman M."/>
            <person name="Song J."/>
            <person name="Olsen R."/>
            <person name="Szafranski K."/>
            <person name="Xu Q."/>
            <person name="Tunggal B."/>
            <person name="Kummerfeld S."/>
            <person name="Madera M."/>
            <person name="Konfortov B.A."/>
            <person name="Rivero F."/>
            <person name="Bankier A.T."/>
            <person name="Lehmann R."/>
            <person name="Hamlin N."/>
            <person name="Davies R."/>
            <person name="Gaudet P."/>
            <person name="Fey P."/>
            <person name="Pilcher K."/>
            <person name="Chen G."/>
            <person name="Saunders D."/>
            <person name="Sodergren E.J."/>
            <person name="Davis P."/>
            <person name="Kerhornou A."/>
            <person name="Nie X."/>
            <person name="Hall N."/>
            <person name="Anjard C."/>
            <person name="Hemphill L."/>
            <person name="Bason N."/>
            <person name="Farbrother P."/>
            <person name="Desany B."/>
            <person name="Just E."/>
            <person name="Morio T."/>
            <person name="Rost R."/>
            <person name="Churcher C.M."/>
            <person name="Cooper J."/>
            <person name="Haydock S."/>
            <person name="van Driessche N."/>
            <person name="Cronin A."/>
            <person name="Goodhead I."/>
            <person name="Muzny D.M."/>
            <person name="Mourier T."/>
            <person name="Pain A."/>
            <person name="Lu M."/>
            <person name="Harper D."/>
            <person name="Lindsay R."/>
            <person name="Hauser H."/>
            <person name="James K.D."/>
            <person name="Quiles M."/>
            <person name="Madan Babu M."/>
            <person name="Saito T."/>
            <person name="Buchrieser C."/>
            <person name="Wardroper A."/>
            <person name="Felder M."/>
            <person name="Thangavelu M."/>
            <person name="Johnson D."/>
            <person name="Knights A."/>
            <person name="Loulseged H."/>
            <person name="Mungall K.L."/>
            <person name="Oliver K."/>
            <person name="Price C."/>
            <person name="Quail M.A."/>
            <person name="Urushihara H."/>
            <person name="Hernandez J."/>
            <person name="Rabbinowitsch E."/>
            <person name="Steffen D."/>
            <person name="Sanders M."/>
            <person name="Ma J."/>
            <person name="Kohara Y."/>
            <person name="Sharp S."/>
            <person name="Simmonds M.N."/>
            <person name="Spiegler S."/>
            <person name="Tivey A."/>
            <person name="Sugano S."/>
            <person name="White B."/>
            <person name="Walker D."/>
            <person name="Woodward J.R."/>
            <person name="Winckler T."/>
            <person name="Tanaka Y."/>
            <person name="Shaulsky G."/>
            <person name="Schleicher M."/>
            <person name="Weinstock G.M."/>
            <person name="Rosenthal A."/>
            <person name="Cox E.C."/>
            <person name="Chisholm R.L."/>
            <person name="Gibbs R.A."/>
            <person name="Loomis W.F."/>
            <person name="Platzer M."/>
            <person name="Kay R.R."/>
            <person name="Williams J.G."/>
            <person name="Dear P.H."/>
            <person name="Noegel A.A."/>
            <person name="Barrell B.G."/>
            <person name="Kuspa A."/>
        </authorList>
    </citation>
    <scope>NUCLEOTIDE SEQUENCE [LARGE SCALE GENOMIC DNA]</scope>
    <source>
        <strain>AX4</strain>
    </source>
</reference>
<evidence type="ECO:0000305" key="1"/>
<organism>
    <name type="scientific">Dictyostelium discoideum</name>
    <name type="common">Social amoeba</name>
    <dbReference type="NCBI Taxonomy" id="44689"/>
    <lineage>
        <taxon>Eukaryota</taxon>
        <taxon>Amoebozoa</taxon>
        <taxon>Evosea</taxon>
        <taxon>Eumycetozoa</taxon>
        <taxon>Dictyostelia</taxon>
        <taxon>Dictyosteliales</taxon>
        <taxon>Dictyosteliaceae</taxon>
        <taxon>Dictyostelium</taxon>
    </lineage>
</organism>
<protein>
    <recommendedName>
        <fullName>HssA/B-like protein 13</fullName>
    </recommendedName>
</protein>